<accession>Q1ACI9</accession>
<sequence length="38" mass="4503">MTQPNPNKQIVELNRTSLFWGLLLIFVLAILFSNYFFN</sequence>
<reference key="1">
    <citation type="journal article" date="2006" name="Mol. Biol. Evol.">
        <title>The chloroplast genome sequence of Chara vulgaris sheds new light into the closest green algal relatives of land plants.</title>
        <authorList>
            <person name="Turmel M."/>
            <person name="Otis C."/>
            <person name="Lemieux C."/>
        </authorList>
    </citation>
    <scope>NUCLEOTIDE SEQUENCE [LARGE SCALE GENOMIC DNA]</scope>
</reference>
<dbReference type="EMBL" id="DQ229107">
    <property type="protein sequence ID" value="ABA61957.1"/>
    <property type="molecule type" value="Genomic_DNA"/>
</dbReference>
<dbReference type="RefSeq" id="YP_635758.1">
    <property type="nucleotide sequence ID" value="NC_008097.1"/>
</dbReference>
<dbReference type="SMR" id="Q1ACI9"/>
<dbReference type="GeneID" id="4100323"/>
<dbReference type="GO" id="GO:0009535">
    <property type="term" value="C:chloroplast thylakoid membrane"/>
    <property type="evidence" value="ECO:0007669"/>
    <property type="project" value="UniProtKB-SubCell"/>
</dbReference>
<dbReference type="GO" id="GO:0009539">
    <property type="term" value="C:photosystem II reaction center"/>
    <property type="evidence" value="ECO:0007669"/>
    <property type="project" value="InterPro"/>
</dbReference>
<dbReference type="GO" id="GO:0015979">
    <property type="term" value="P:photosynthesis"/>
    <property type="evidence" value="ECO:0007669"/>
    <property type="project" value="UniProtKB-UniRule"/>
</dbReference>
<dbReference type="HAMAP" id="MF_01317">
    <property type="entry name" value="PSII_PsbL"/>
    <property type="match status" value="1"/>
</dbReference>
<dbReference type="InterPro" id="IPR003372">
    <property type="entry name" value="PSII_PsbL"/>
</dbReference>
<dbReference type="InterPro" id="IPR037266">
    <property type="entry name" value="PSII_PsbL_sf"/>
</dbReference>
<dbReference type="NCBIfam" id="NF001972">
    <property type="entry name" value="PRK00753.1"/>
    <property type="match status" value="1"/>
</dbReference>
<dbReference type="Pfam" id="PF02419">
    <property type="entry name" value="PsbL"/>
    <property type="match status" value="1"/>
</dbReference>
<dbReference type="SUPFAM" id="SSF161017">
    <property type="entry name" value="Photosystem II reaction center protein L, PsbL"/>
    <property type="match status" value="1"/>
</dbReference>
<protein>
    <recommendedName>
        <fullName evidence="1">Photosystem II reaction center protein L</fullName>
        <shortName evidence="1">PSII-L</shortName>
    </recommendedName>
</protein>
<feature type="chain" id="PRO_0000276201" description="Photosystem II reaction center protein L">
    <location>
        <begin position="1"/>
        <end position="38"/>
    </location>
</feature>
<feature type="transmembrane region" description="Helical" evidence="1">
    <location>
        <begin position="17"/>
        <end position="37"/>
    </location>
</feature>
<evidence type="ECO:0000255" key="1">
    <source>
        <dbReference type="HAMAP-Rule" id="MF_01317"/>
    </source>
</evidence>
<comment type="function">
    <text evidence="1">One of the components of the core complex of photosystem II (PSII). PSII is a light-driven water:plastoquinone oxidoreductase that uses light energy to abstract electrons from H(2)O, generating O(2) and a proton gradient subsequently used for ATP formation. It consists of a core antenna complex that captures photons, and an electron transfer chain that converts photonic excitation into a charge separation. This subunit is found at the monomer-monomer interface and is required for correct PSII assembly and/or dimerization.</text>
</comment>
<comment type="subunit">
    <text evidence="1">PSII is composed of 1 copy each of membrane proteins PsbA, PsbB, PsbC, PsbD, PsbE, PsbF, PsbH, PsbI, PsbJ, PsbK, PsbL, PsbM, PsbT, PsbX, PsbY, PsbZ, Psb30/Ycf12, at least 3 peripheral proteins of the oxygen-evolving complex and a large number of cofactors. It forms dimeric complexes.</text>
</comment>
<comment type="subcellular location">
    <subcellularLocation>
        <location evidence="1">Plastid</location>
        <location evidence="1">Chloroplast thylakoid membrane</location>
        <topology evidence="1">Single-pass membrane protein</topology>
    </subcellularLocation>
</comment>
<comment type="similarity">
    <text evidence="1">Belongs to the PsbL family.</text>
</comment>
<geneLocation type="chloroplast"/>
<keyword id="KW-0150">Chloroplast</keyword>
<keyword id="KW-0472">Membrane</keyword>
<keyword id="KW-0602">Photosynthesis</keyword>
<keyword id="KW-0604">Photosystem II</keyword>
<keyword id="KW-0934">Plastid</keyword>
<keyword id="KW-0674">Reaction center</keyword>
<keyword id="KW-0793">Thylakoid</keyword>
<keyword id="KW-0812">Transmembrane</keyword>
<keyword id="KW-1133">Transmembrane helix</keyword>
<gene>
    <name evidence="1" type="primary">psbL</name>
</gene>
<organism>
    <name type="scientific">Chara vulgaris</name>
    <name type="common">Common stonewort</name>
    <dbReference type="NCBI Taxonomy" id="55564"/>
    <lineage>
        <taxon>Eukaryota</taxon>
        <taxon>Viridiplantae</taxon>
        <taxon>Streptophyta</taxon>
        <taxon>Charophyceae</taxon>
        <taxon>Charales</taxon>
        <taxon>Characeae</taxon>
        <taxon>Chara</taxon>
    </lineage>
</organism>
<name>PSBL_CHAVU</name>
<proteinExistence type="inferred from homology"/>